<name>TRMD_STUS1</name>
<organism>
    <name type="scientific">Stutzerimonas stutzeri (strain A1501)</name>
    <name type="common">Pseudomonas stutzeri</name>
    <dbReference type="NCBI Taxonomy" id="379731"/>
    <lineage>
        <taxon>Bacteria</taxon>
        <taxon>Pseudomonadati</taxon>
        <taxon>Pseudomonadota</taxon>
        <taxon>Gammaproteobacteria</taxon>
        <taxon>Pseudomonadales</taxon>
        <taxon>Pseudomonadaceae</taxon>
        <taxon>Stutzerimonas</taxon>
    </lineage>
</organism>
<accession>A4VIT7</accession>
<comment type="function">
    <text evidence="1">Specifically methylates guanosine-37 in various tRNAs.</text>
</comment>
<comment type="catalytic activity">
    <reaction evidence="1">
        <text>guanosine(37) in tRNA + S-adenosyl-L-methionine = N(1)-methylguanosine(37) in tRNA + S-adenosyl-L-homocysteine + H(+)</text>
        <dbReference type="Rhea" id="RHEA:36899"/>
        <dbReference type="Rhea" id="RHEA-COMP:10145"/>
        <dbReference type="Rhea" id="RHEA-COMP:10147"/>
        <dbReference type="ChEBI" id="CHEBI:15378"/>
        <dbReference type="ChEBI" id="CHEBI:57856"/>
        <dbReference type="ChEBI" id="CHEBI:59789"/>
        <dbReference type="ChEBI" id="CHEBI:73542"/>
        <dbReference type="ChEBI" id="CHEBI:74269"/>
        <dbReference type="EC" id="2.1.1.228"/>
    </reaction>
</comment>
<comment type="subunit">
    <text evidence="1">Homodimer.</text>
</comment>
<comment type="subcellular location">
    <subcellularLocation>
        <location evidence="1">Cytoplasm</location>
    </subcellularLocation>
</comment>
<comment type="similarity">
    <text evidence="1">Belongs to the RNA methyltransferase TrmD family.</text>
</comment>
<sequence length="250" mass="27901">MAGLRVEVISLFPDMFAAISEYGITSRAVKQGLLQLNCWNPRSYTEDRHQTVDDRPFGGGPGMVMKIKPLELALADAKRAAGGKAKVIYLSPQGRQLKQADVRELANEEALILIAGRYEGIDERFIEAHVDEEWSIGDYVLSGGELPAMVLIDAVTRLLPGALGHAGSAEEDSFTDGLLDCPHYTRPEVYEGKCVPEVLLSGNHEHIRRWRLQQSLGRTWERRADLLDSRSLSGEEQKLLAEYIRQRNDS</sequence>
<reference key="1">
    <citation type="journal article" date="2008" name="Proc. Natl. Acad. Sci. U.S.A.">
        <title>Nitrogen fixation island and rhizosphere competence traits in the genome of root-associated Pseudomonas stutzeri A1501.</title>
        <authorList>
            <person name="Yan Y."/>
            <person name="Yang J."/>
            <person name="Dou Y."/>
            <person name="Chen M."/>
            <person name="Ping S."/>
            <person name="Peng J."/>
            <person name="Lu W."/>
            <person name="Zhang W."/>
            <person name="Yao Z."/>
            <person name="Li H."/>
            <person name="Liu W."/>
            <person name="He S."/>
            <person name="Geng L."/>
            <person name="Zhang X."/>
            <person name="Yang F."/>
            <person name="Yu H."/>
            <person name="Zhan Y."/>
            <person name="Li D."/>
            <person name="Lin Z."/>
            <person name="Wang Y."/>
            <person name="Elmerich C."/>
            <person name="Lin M."/>
            <person name="Jin Q."/>
        </authorList>
    </citation>
    <scope>NUCLEOTIDE SEQUENCE [LARGE SCALE GENOMIC DNA]</scope>
    <source>
        <strain>A1501</strain>
    </source>
</reference>
<evidence type="ECO:0000255" key="1">
    <source>
        <dbReference type="HAMAP-Rule" id="MF_00605"/>
    </source>
</evidence>
<gene>
    <name evidence="1" type="primary">trmD</name>
    <name type="ordered locus">PST_1193</name>
</gene>
<dbReference type="EC" id="2.1.1.228" evidence="1"/>
<dbReference type="EMBL" id="CP000304">
    <property type="protein sequence ID" value="ABP78888.1"/>
    <property type="molecule type" value="Genomic_DNA"/>
</dbReference>
<dbReference type="RefSeq" id="WP_011912375.1">
    <property type="nucleotide sequence ID" value="NC_009434.1"/>
</dbReference>
<dbReference type="SMR" id="A4VIT7"/>
<dbReference type="GeneID" id="66820344"/>
<dbReference type="KEGG" id="psa:PST_1193"/>
<dbReference type="eggNOG" id="COG0336">
    <property type="taxonomic scope" value="Bacteria"/>
</dbReference>
<dbReference type="HOGENOM" id="CLU_047363_0_1_6"/>
<dbReference type="Proteomes" id="UP000000233">
    <property type="component" value="Chromosome"/>
</dbReference>
<dbReference type="GO" id="GO:0005829">
    <property type="term" value="C:cytosol"/>
    <property type="evidence" value="ECO:0007669"/>
    <property type="project" value="TreeGrafter"/>
</dbReference>
<dbReference type="GO" id="GO:0052906">
    <property type="term" value="F:tRNA (guanine(37)-N1)-methyltransferase activity"/>
    <property type="evidence" value="ECO:0007669"/>
    <property type="project" value="UniProtKB-UniRule"/>
</dbReference>
<dbReference type="GO" id="GO:0002939">
    <property type="term" value="P:tRNA N1-guanine methylation"/>
    <property type="evidence" value="ECO:0007669"/>
    <property type="project" value="TreeGrafter"/>
</dbReference>
<dbReference type="CDD" id="cd18080">
    <property type="entry name" value="TrmD-like"/>
    <property type="match status" value="1"/>
</dbReference>
<dbReference type="FunFam" id="1.10.1270.20:FF:000001">
    <property type="entry name" value="tRNA (guanine-N(1)-)-methyltransferase"/>
    <property type="match status" value="1"/>
</dbReference>
<dbReference type="FunFam" id="3.40.1280.10:FF:000001">
    <property type="entry name" value="tRNA (guanine-N(1)-)-methyltransferase"/>
    <property type="match status" value="1"/>
</dbReference>
<dbReference type="Gene3D" id="3.40.1280.10">
    <property type="match status" value="1"/>
</dbReference>
<dbReference type="Gene3D" id="1.10.1270.20">
    <property type="entry name" value="tRNA(m1g37)methyltransferase, domain 2"/>
    <property type="match status" value="1"/>
</dbReference>
<dbReference type="HAMAP" id="MF_00605">
    <property type="entry name" value="TrmD"/>
    <property type="match status" value="1"/>
</dbReference>
<dbReference type="InterPro" id="IPR029028">
    <property type="entry name" value="Alpha/beta_knot_MTases"/>
</dbReference>
<dbReference type="InterPro" id="IPR023148">
    <property type="entry name" value="tRNA_m1G_MeTrfase_C_sf"/>
</dbReference>
<dbReference type="InterPro" id="IPR002649">
    <property type="entry name" value="tRNA_m1G_MeTrfase_TrmD"/>
</dbReference>
<dbReference type="InterPro" id="IPR029026">
    <property type="entry name" value="tRNA_m1G_MTases_N"/>
</dbReference>
<dbReference type="InterPro" id="IPR016009">
    <property type="entry name" value="tRNA_MeTrfase_TRMD/TRM10"/>
</dbReference>
<dbReference type="NCBIfam" id="NF000648">
    <property type="entry name" value="PRK00026.1"/>
    <property type="match status" value="1"/>
</dbReference>
<dbReference type="NCBIfam" id="TIGR00088">
    <property type="entry name" value="trmD"/>
    <property type="match status" value="1"/>
</dbReference>
<dbReference type="PANTHER" id="PTHR46417">
    <property type="entry name" value="TRNA (GUANINE-N(1)-)-METHYLTRANSFERASE"/>
    <property type="match status" value="1"/>
</dbReference>
<dbReference type="PANTHER" id="PTHR46417:SF1">
    <property type="entry name" value="TRNA (GUANINE-N(1)-)-METHYLTRANSFERASE"/>
    <property type="match status" value="1"/>
</dbReference>
<dbReference type="Pfam" id="PF01746">
    <property type="entry name" value="tRNA_m1G_MT"/>
    <property type="match status" value="1"/>
</dbReference>
<dbReference type="PIRSF" id="PIRSF000386">
    <property type="entry name" value="tRNA_mtase"/>
    <property type="match status" value="1"/>
</dbReference>
<dbReference type="SUPFAM" id="SSF75217">
    <property type="entry name" value="alpha/beta knot"/>
    <property type="match status" value="1"/>
</dbReference>
<protein>
    <recommendedName>
        <fullName evidence="1">tRNA (guanine-N(1)-)-methyltransferase</fullName>
        <ecNumber evidence="1">2.1.1.228</ecNumber>
    </recommendedName>
    <alternativeName>
        <fullName evidence="1">M1G-methyltransferase</fullName>
    </alternativeName>
    <alternativeName>
        <fullName evidence="1">tRNA [GM37] methyltransferase</fullName>
    </alternativeName>
</protein>
<keyword id="KW-0963">Cytoplasm</keyword>
<keyword id="KW-0489">Methyltransferase</keyword>
<keyword id="KW-1185">Reference proteome</keyword>
<keyword id="KW-0949">S-adenosyl-L-methionine</keyword>
<keyword id="KW-0808">Transferase</keyword>
<keyword id="KW-0819">tRNA processing</keyword>
<proteinExistence type="inferred from homology"/>
<feature type="chain" id="PRO_1000006506" description="tRNA (guanine-N(1)-)-methyltransferase">
    <location>
        <begin position="1"/>
        <end position="250"/>
    </location>
</feature>
<feature type="binding site" evidence="1">
    <location>
        <position position="116"/>
    </location>
    <ligand>
        <name>S-adenosyl-L-methionine</name>
        <dbReference type="ChEBI" id="CHEBI:59789"/>
    </ligand>
</feature>
<feature type="binding site" evidence="1">
    <location>
        <begin position="136"/>
        <end position="141"/>
    </location>
    <ligand>
        <name>S-adenosyl-L-methionine</name>
        <dbReference type="ChEBI" id="CHEBI:59789"/>
    </ligand>
</feature>